<comment type="function">
    <text evidence="1">Catalyzes the formation of S-adenosylmethionine (AdoMet) from methionine and ATP. The overall synthetic reaction is composed of two sequential steps, AdoMet formation and the subsequent tripolyphosphate hydrolysis which occurs prior to release of AdoMet from the enzyme.</text>
</comment>
<comment type="catalytic activity">
    <reaction evidence="1">
        <text>L-methionine + ATP + H2O = S-adenosyl-L-methionine + phosphate + diphosphate</text>
        <dbReference type="Rhea" id="RHEA:21080"/>
        <dbReference type="ChEBI" id="CHEBI:15377"/>
        <dbReference type="ChEBI" id="CHEBI:30616"/>
        <dbReference type="ChEBI" id="CHEBI:33019"/>
        <dbReference type="ChEBI" id="CHEBI:43474"/>
        <dbReference type="ChEBI" id="CHEBI:57844"/>
        <dbReference type="ChEBI" id="CHEBI:59789"/>
        <dbReference type="EC" id="2.5.1.6"/>
    </reaction>
</comment>
<comment type="cofactor">
    <cofactor evidence="1">
        <name>Mg(2+)</name>
        <dbReference type="ChEBI" id="CHEBI:18420"/>
    </cofactor>
    <text evidence="1">Binds 2 divalent ions per subunit.</text>
</comment>
<comment type="cofactor">
    <cofactor evidence="1">
        <name>K(+)</name>
        <dbReference type="ChEBI" id="CHEBI:29103"/>
    </cofactor>
    <text evidence="1">Binds 1 potassium ion per subunit.</text>
</comment>
<comment type="pathway">
    <text evidence="1">Amino-acid biosynthesis; S-adenosyl-L-methionine biosynthesis; S-adenosyl-L-methionine from L-methionine: step 1/1.</text>
</comment>
<comment type="subunit">
    <text evidence="1">Homotetramer; dimer of dimers.</text>
</comment>
<comment type="subcellular location">
    <subcellularLocation>
        <location evidence="1">Cytoplasm</location>
    </subcellularLocation>
</comment>
<comment type="similarity">
    <text evidence="1">Belongs to the AdoMet synthase family.</text>
</comment>
<dbReference type="EC" id="2.5.1.6" evidence="1"/>
<dbReference type="EMBL" id="CP000082">
    <property type="protein sequence ID" value="AAZ18681.1"/>
    <property type="molecule type" value="Genomic_DNA"/>
</dbReference>
<dbReference type="RefSeq" id="WP_011280108.1">
    <property type="nucleotide sequence ID" value="NC_007204.1"/>
</dbReference>
<dbReference type="SMR" id="Q4FTH7"/>
<dbReference type="STRING" id="259536.Psyc_0828"/>
<dbReference type="KEGG" id="par:Psyc_0828"/>
<dbReference type="eggNOG" id="COG0192">
    <property type="taxonomic scope" value="Bacteria"/>
</dbReference>
<dbReference type="HOGENOM" id="CLU_041802_1_1_6"/>
<dbReference type="OrthoDB" id="9801686at2"/>
<dbReference type="UniPathway" id="UPA00315">
    <property type="reaction ID" value="UER00080"/>
</dbReference>
<dbReference type="Proteomes" id="UP000000546">
    <property type="component" value="Chromosome"/>
</dbReference>
<dbReference type="GO" id="GO:0005737">
    <property type="term" value="C:cytoplasm"/>
    <property type="evidence" value="ECO:0007669"/>
    <property type="project" value="UniProtKB-SubCell"/>
</dbReference>
<dbReference type="GO" id="GO:0005524">
    <property type="term" value="F:ATP binding"/>
    <property type="evidence" value="ECO:0007669"/>
    <property type="project" value="UniProtKB-UniRule"/>
</dbReference>
<dbReference type="GO" id="GO:0000287">
    <property type="term" value="F:magnesium ion binding"/>
    <property type="evidence" value="ECO:0007669"/>
    <property type="project" value="UniProtKB-UniRule"/>
</dbReference>
<dbReference type="GO" id="GO:0004478">
    <property type="term" value="F:methionine adenosyltransferase activity"/>
    <property type="evidence" value="ECO:0007669"/>
    <property type="project" value="UniProtKB-UniRule"/>
</dbReference>
<dbReference type="GO" id="GO:0006730">
    <property type="term" value="P:one-carbon metabolic process"/>
    <property type="evidence" value="ECO:0007669"/>
    <property type="project" value="UniProtKB-KW"/>
</dbReference>
<dbReference type="GO" id="GO:0006556">
    <property type="term" value="P:S-adenosylmethionine biosynthetic process"/>
    <property type="evidence" value="ECO:0007669"/>
    <property type="project" value="UniProtKB-UniRule"/>
</dbReference>
<dbReference type="CDD" id="cd18079">
    <property type="entry name" value="S-AdoMet_synt"/>
    <property type="match status" value="1"/>
</dbReference>
<dbReference type="FunFam" id="3.30.300.10:FF:000003">
    <property type="entry name" value="S-adenosylmethionine synthase"/>
    <property type="match status" value="1"/>
</dbReference>
<dbReference type="Gene3D" id="3.30.300.10">
    <property type="match status" value="3"/>
</dbReference>
<dbReference type="HAMAP" id="MF_00086">
    <property type="entry name" value="S_AdoMet_synth1"/>
    <property type="match status" value="1"/>
</dbReference>
<dbReference type="InterPro" id="IPR022631">
    <property type="entry name" value="ADOMET_SYNTHASE_CS"/>
</dbReference>
<dbReference type="InterPro" id="IPR022630">
    <property type="entry name" value="S-AdoMet_synt_C"/>
</dbReference>
<dbReference type="InterPro" id="IPR022629">
    <property type="entry name" value="S-AdoMet_synt_central"/>
</dbReference>
<dbReference type="InterPro" id="IPR022628">
    <property type="entry name" value="S-AdoMet_synt_N"/>
</dbReference>
<dbReference type="InterPro" id="IPR002133">
    <property type="entry name" value="S-AdoMet_synthetase"/>
</dbReference>
<dbReference type="InterPro" id="IPR022636">
    <property type="entry name" value="S-AdoMet_synthetase_sfam"/>
</dbReference>
<dbReference type="NCBIfam" id="TIGR01034">
    <property type="entry name" value="metK"/>
    <property type="match status" value="1"/>
</dbReference>
<dbReference type="PANTHER" id="PTHR11964">
    <property type="entry name" value="S-ADENOSYLMETHIONINE SYNTHETASE"/>
    <property type="match status" value="1"/>
</dbReference>
<dbReference type="Pfam" id="PF02773">
    <property type="entry name" value="S-AdoMet_synt_C"/>
    <property type="match status" value="1"/>
</dbReference>
<dbReference type="Pfam" id="PF02772">
    <property type="entry name" value="S-AdoMet_synt_M"/>
    <property type="match status" value="1"/>
</dbReference>
<dbReference type="Pfam" id="PF00438">
    <property type="entry name" value="S-AdoMet_synt_N"/>
    <property type="match status" value="1"/>
</dbReference>
<dbReference type="PIRSF" id="PIRSF000497">
    <property type="entry name" value="MAT"/>
    <property type="match status" value="1"/>
</dbReference>
<dbReference type="SUPFAM" id="SSF55973">
    <property type="entry name" value="S-adenosylmethionine synthetase"/>
    <property type="match status" value="3"/>
</dbReference>
<dbReference type="PROSITE" id="PS00376">
    <property type="entry name" value="ADOMET_SYNTHASE_1"/>
    <property type="match status" value="1"/>
</dbReference>
<dbReference type="PROSITE" id="PS00377">
    <property type="entry name" value="ADOMET_SYNTHASE_2"/>
    <property type="match status" value="1"/>
</dbReference>
<reference key="1">
    <citation type="journal article" date="2010" name="Appl. Environ. Microbiol.">
        <title>The genome sequence of Psychrobacter arcticus 273-4, a psychroactive Siberian permafrost bacterium, reveals mechanisms for adaptation to low-temperature growth.</title>
        <authorList>
            <person name="Ayala-del-Rio H.L."/>
            <person name="Chain P.S."/>
            <person name="Grzymski J.J."/>
            <person name="Ponder M.A."/>
            <person name="Ivanova N."/>
            <person name="Bergholz P.W."/>
            <person name="Di Bartolo G."/>
            <person name="Hauser L."/>
            <person name="Land M."/>
            <person name="Bakermans C."/>
            <person name="Rodrigues D."/>
            <person name="Klappenbach J."/>
            <person name="Zarka D."/>
            <person name="Larimer F."/>
            <person name="Richardson P."/>
            <person name="Murray A."/>
            <person name="Thomashow M."/>
            <person name="Tiedje J.M."/>
        </authorList>
    </citation>
    <scope>NUCLEOTIDE SEQUENCE [LARGE SCALE GENOMIC DNA]</scope>
    <source>
        <strain>DSM 17307 / VKM B-2377 / 273-4</strain>
    </source>
</reference>
<proteinExistence type="inferred from homology"/>
<keyword id="KW-0067">ATP-binding</keyword>
<keyword id="KW-0963">Cytoplasm</keyword>
<keyword id="KW-0460">Magnesium</keyword>
<keyword id="KW-0479">Metal-binding</keyword>
<keyword id="KW-0547">Nucleotide-binding</keyword>
<keyword id="KW-0554">One-carbon metabolism</keyword>
<keyword id="KW-0630">Potassium</keyword>
<keyword id="KW-1185">Reference proteome</keyword>
<keyword id="KW-0808">Transferase</keyword>
<gene>
    <name evidence="1" type="primary">metK</name>
    <name type="ordered locus">Psyc_0828</name>
</gene>
<name>METK_PSYA2</name>
<organism>
    <name type="scientific">Psychrobacter arcticus (strain DSM 17307 / VKM B-2377 / 273-4)</name>
    <dbReference type="NCBI Taxonomy" id="259536"/>
    <lineage>
        <taxon>Bacteria</taxon>
        <taxon>Pseudomonadati</taxon>
        <taxon>Pseudomonadota</taxon>
        <taxon>Gammaproteobacteria</taxon>
        <taxon>Moraxellales</taxon>
        <taxon>Moraxellaceae</taxon>
        <taxon>Psychrobacter</taxon>
    </lineage>
</organism>
<protein>
    <recommendedName>
        <fullName evidence="1">S-adenosylmethionine synthase</fullName>
        <shortName evidence="1">AdoMet synthase</shortName>
        <ecNumber evidence="1">2.5.1.6</ecNumber>
    </recommendedName>
    <alternativeName>
        <fullName evidence="1">MAT</fullName>
    </alternativeName>
    <alternativeName>
        <fullName evidence="1">Methionine adenosyltransferase</fullName>
    </alternativeName>
</protein>
<accession>Q4FTH7</accession>
<sequence length="388" mass="42136">MREYNLFTSESVSEGHPDKMADQISDAILDAILRQDLHARVACETLVKTGAVILAGEITTTANIDVERIVRDTVNGIGYHHSDLGFDGETCAVINMLGKQSPEIAQGVDRADPEEQGAGDQGLMFGYASNETEVLMPAPIEYAHRLMERQSELRRAGELPWLRPDAKAQITLKYDGSKPVAIDAVVLSTQHDPSISQADLQEAIMESIIKQVLPAELLHAGTRYHINPTGKFVIGGPVGDAGLTGRKIIVDTYGGMARHGGGAFSGKDPSKVDRSAAYAVRYVAKNIVAAGIADRCEVQVSYAIGVAEPTSISINTFGTNKISNDEIIRLIRTHFDLRPYGITRMLNLLQPMYQQTASFGHFGRQGSETAFTWEKIDKAEILKADAGL</sequence>
<evidence type="ECO:0000255" key="1">
    <source>
        <dbReference type="HAMAP-Rule" id="MF_00086"/>
    </source>
</evidence>
<feature type="chain" id="PRO_0000241022" description="S-adenosylmethionine synthase">
    <location>
        <begin position="1"/>
        <end position="388"/>
    </location>
</feature>
<feature type="region of interest" description="Flexible loop" evidence="1">
    <location>
        <begin position="100"/>
        <end position="110"/>
    </location>
</feature>
<feature type="binding site" description="in other chain" evidence="1">
    <location>
        <position position="16"/>
    </location>
    <ligand>
        <name>ATP</name>
        <dbReference type="ChEBI" id="CHEBI:30616"/>
        <note>ligand shared between two neighboring subunits</note>
    </ligand>
</feature>
<feature type="binding site" evidence="1">
    <location>
        <position position="18"/>
    </location>
    <ligand>
        <name>Mg(2+)</name>
        <dbReference type="ChEBI" id="CHEBI:18420"/>
    </ligand>
</feature>
<feature type="binding site" evidence="1">
    <location>
        <position position="44"/>
    </location>
    <ligand>
        <name>K(+)</name>
        <dbReference type="ChEBI" id="CHEBI:29103"/>
    </ligand>
</feature>
<feature type="binding site" description="in other chain" evidence="1">
    <location>
        <position position="57"/>
    </location>
    <ligand>
        <name>L-methionine</name>
        <dbReference type="ChEBI" id="CHEBI:57844"/>
        <note>ligand shared between two neighboring subunits</note>
    </ligand>
</feature>
<feature type="binding site" description="in other chain" evidence="1">
    <location>
        <position position="100"/>
    </location>
    <ligand>
        <name>L-methionine</name>
        <dbReference type="ChEBI" id="CHEBI:57844"/>
        <note>ligand shared between two neighboring subunits</note>
    </ligand>
</feature>
<feature type="binding site" description="in other chain" evidence="1">
    <location>
        <begin position="165"/>
        <end position="167"/>
    </location>
    <ligand>
        <name>ATP</name>
        <dbReference type="ChEBI" id="CHEBI:30616"/>
        <note>ligand shared between two neighboring subunits</note>
    </ligand>
</feature>
<feature type="binding site" description="in other chain" evidence="1">
    <location>
        <begin position="231"/>
        <end position="232"/>
    </location>
    <ligand>
        <name>ATP</name>
        <dbReference type="ChEBI" id="CHEBI:30616"/>
        <note>ligand shared between two neighboring subunits</note>
    </ligand>
</feature>
<feature type="binding site" evidence="1">
    <location>
        <position position="240"/>
    </location>
    <ligand>
        <name>ATP</name>
        <dbReference type="ChEBI" id="CHEBI:30616"/>
        <note>ligand shared between two neighboring subunits</note>
    </ligand>
</feature>
<feature type="binding site" evidence="1">
    <location>
        <position position="240"/>
    </location>
    <ligand>
        <name>L-methionine</name>
        <dbReference type="ChEBI" id="CHEBI:57844"/>
        <note>ligand shared between two neighboring subunits</note>
    </ligand>
</feature>
<feature type="binding site" description="in other chain" evidence="1">
    <location>
        <begin position="246"/>
        <end position="247"/>
    </location>
    <ligand>
        <name>ATP</name>
        <dbReference type="ChEBI" id="CHEBI:30616"/>
        <note>ligand shared between two neighboring subunits</note>
    </ligand>
</feature>
<feature type="binding site" evidence="1">
    <location>
        <position position="263"/>
    </location>
    <ligand>
        <name>ATP</name>
        <dbReference type="ChEBI" id="CHEBI:30616"/>
        <note>ligand shared between two neighboring subunits</note>
    </ligand>
</feature>
<feature type="binding site" evidence="1">
    <location>
        <position position="267"/>
    </location>
    <ligand>
        <name>ATP</name>
        <dbReference type="ChEBI" id="CHEBI:30616"/>
        <note>ligand shared between two neighboring subunits</note>
    </ligand>
</feature>
<feature type="binding site" description="in other chain" evidence="1">
    <location>
        <position position="271"/>
    </location>
    <ligand>
        <name>L-methionine</name>
        <dbReference type="ChEBI" id="CHEBI:57844"/>
        <note>ligand shared between two neighboring subunits</note>
    </ligand>
</feature>